<dbReference type="EMBL" id="Y08999">
    <property type="protein sequence ID" value="CAA70203.1"/>
    <property type="molecule type" value="mRNA"/>
</dbReference>
<dbReference type="EMBL" id="AK297111">
    <property type="protein sequence ID" value="BAG59619.1"/>
    <property type="molecule type" value="mRNA"/>
</dbReference>
<dbReference type="EMBL" id="AC004834">
    <property type="status" value="NOT_ANNOTATED_CDS"/>
    <property type="molecule type" value="Genomic_DNA"/>
</dbReference>
<dbReference type="EMBL" id="AC004922">
    <property type="status" value="NOT_ANNOTATED_CDS"/>
    <property type="molecule type" value="Genomic_DNA"/>
</dbReference>
<dbReference type="EMBL" id="CH236956">
    <property type="protein sequence ID" value="EAL23883.1"/>
    <property type="molecule type" value="Genomic_DNA"/>
</dbReference>
<dbReference type="EMBL" id="CH471091">
    <property type="protein sequence ID" value="EAW76682.1"/>
    <property type="molecule type" value="Genomic_DNA"/>
</dbReference>
<dbReference type="EMBL" id="CH471091">
    <property type="protein sequence ID" value="EAW76683.1"/>
    <property type="molecule type" value="Genomic_DNA"/>
</dbReference>
<dbReference type="EMBL" id="BC039594">
    <property type="protein sequence ID" value="AAH39594.2"/>
    <property type="molecule type" value="mRNA"/>
</dbReference>
<dbReference type="EMBL" id="BC047889">
    <property type="protein sequence ID" value="AAH47889.2"/>
    <property type="molecule type" value="mRNA"/>
</dbReference>
<dbReference type="EMBL" id="BC054027">
    <property type="protein sequence ID" value="AAH54027.1"/>
    <property type="molecule type" value="mRNA"/>
</dbReference>
<dbReference type="CCDS" id="CCDS5660.1">
    <molecule id="Q92747-1"/>
</dbReference>
<dbReference type="RefSeq" id="NP_006400.2">
    <molecule id="Q92747-1"/>
    <property type="nucleotide sequence ID" value="NM_006409.3"/>
</dbReference>
<dbReference type="PDB" id="6YW7">
    <property type="method" value="EM"/>
    <property type="resolution" value="4.50 A"/>
    <property type="chains" value="C=1-370"/>
</dbReference>
<dbReference type="PDBsum" id="6YW7"/>
<dbReference type="EMDB" id="EMD-10960"/>
<dbReference type="SMR" id="Q92747"/>
<dbReference type="BioGRID" id="115803">
    <property type="interactions" value="105"/>
</dbReference>
<dbReference type="ComplexPortal" id="CPX-2490">
    <property type="entry name" value="Actin-related protein 2/3 complex, ARPC1A-ACTR3B-ARPC5 variant"/>
</dbReference>
<dbReference type="ComplexPortal" id="CPX-2586">
    <property type="entry name" value="Actin-related protein 2/3 complex, ARPC1A-ACTR3-ARPC5 variant"/>
</dbReference>
<dbReference type="ComplexPortal" id="CPX-2592">
    <property type="entry name" value="Actin-related protein 2/3 complex, ARPC1A-ACTR3-ARPC5L variant"/>
</dbReference>
<dbReference type="ComplexPortal" id="CPX-2668">
    <property type="entry name" value="Actin-related protein 2/3 complex, ARPC1B-ACTR3B-ARPC5L variant"/>
</dbReference>
<dbReference type="DIP" id="DIP-33142N"/>
<dbReference type="FunCoup" id="Q92747">
    <property type="interactions" value="3170"/>
</dbReference>
<dbReference type="IntAct" id="Q92747">
    <property type="interactions" value="50"/>
</dbReference>
<dbReference type="MINT" id="Q92747"/>
<dbReference type="STRING" id="9606.ENSP00000262942"/>
<dbReference type="GlyGen" id="Q92747">
    <property type="glycosylation" value="2 sites, 2 N-linked glycans (1 site), 1 O-linked glycan (1 site)"/>
</dbReference>
<dbReference type="iPTMnet" id="Q92747"/>
<dbReference type="PhosphoSitePlus" id="Q92747"/>
<dbReference type="SwissPalm" id="Q92747"/>
<dbReference type="BioMuta" id="ARPC1A"/>
<dbReference type="DMDM" id="88984001"/>
<dbReference type="jPOST" id="Q92747"/>
<dbReference type="MassIVE" id="Q92747"/>
<dbReference type="PaxDb" id="9606-ENSP00000262942"/>
<dbReference type="PeptideAtlas" id="Q92747"/>
<dbReference type="ProteomicsDB" id="4550"/>
<dbReference type="ProteomicsDB" id="75438">
    <molecule id="Q92747-1"/>
</dbReference>
<dbReference type="Pumba" id="Q92747"/>
<dbReference type="Antibodypedia" id="34784">
    <property type="antibodies" value="232 antibodies from 29 providers"/>
</dbReference>
<dbReference type="DNASU" id="10552"/>
<dbReference type="Ensembl" id="ENST00000262942.10">
    <molecule id="Q92747-1"/>
    <property type="protein sequence ID" value="ENSP00000262942.5"/>
    <property type="gene ID" value="ENSG00000241685.10"/>
</dbReference>
<dbReference type="GeneID" id="10552"/>
<dbReference type="KEGG" id="hsa:10552"/>
<dbReference type="MANE-Select" id="ENST00000262942.10">
    <property type="protein sequence ID" value="ENSP00000262942.5"/>
    <property type="RefSeq nucleotide sequence ID" value="NM_006409.4"/>
    <property type="RefSeq protein sequence ID" value="NP_006400.2"/>
</dbReference>
<dbReference type="AGR" id="HGNC:703"/>
<dbReference type="CTD" id="10552"/>
<dbReference type="DisGeNET" id="10552"/>
<dbReference type="GeneCards" id="ARPC1A"/>
<dbReference type="HGNC" id="HGNC:703">
    <property type="gene designation" value="ARPC1A"/>
</dbReference>
<dbReference type="HPA" id="ENSG00000241685">
    <property type="expression patterns" value="Low tissue specificity"/>
</dbReference>
<dbReference type="MIM" id="604220">
    <property type="type" value="gene"/>
</dbReference>
<dbReference type="neXtProt" id="NX_Q92747"/>
<dbReference type="OpenTargets" id="ENSG00000241685"/>
<dbReference type="PharmGKB" id="PA24997"/>
<dbReference type="VEuPathDB" id="HostDB:ENSG00000241685"/>
<dbReference type="eggNOG" id="KOG1523">
    <property type="taxonomic scope" value="Eukaryota"/>
</dbReference>
<dbReference type="GeneTree" id="ENSGT00950000183183"/>
<dbReference type="HOGENOM" id="CLU_034396_1_0_1"/>
<dbReference type="InParanoid" id="Q92747"/>
<dbReference type="OMA" id="YVWEPSP"/>
<dbReference type="OrthoDB" id="406844at2759"/>
<dbReference type="PAN-GO" id="Q92747">
    <property type="GO annotations" value="3 GO annotations based on evolutionary models"/>
</dbReference>
<dbReference type="PhylomeDB" id="Q92747"/>
<dbReference type="TreeFam" id="TF315041"/>
<dbReference type="PathwayCommons" id="Q92747"/>
<dbReference type="Reactome" id="R-HSA-2029482">
    <property type="pathway name" value="Regulation of actin dynamics for phagocytic cup formation"/>
</dbReference>
<dbReference type="Reactome" id="R-HSA-3928662">
    <property type="pathway name" value="EPHB-mediated forward signaling"/>
</dbReference>
<dbReference type="Reactome" id="R-HSA-5663213">
    <property type="pathway name" value="RHO GTPases Activate WASPs and WAVEs"/>
</dbReference>
<dbReference type="Reactome" id="R-HSA-8856828">
    <property type="pathway name" value="Clathrin-mediated endocytosis"/>
</dbReference>
<dbReference type="Reactome" id="R-HSA-9664422">
    <property type="pathway name" value="FCGR3A-mediated phagocytosis"/>
</dbReference>
<dbReference type="SignaLink" id="Q92747"/>
<dbReference type="SIGNOR" id="Q92747"/>
<dbReference type="BioGRID-ORCS" id="10552">
    <property type="hits" value="35 hits in 1155 CRISPR screens"/>
</dbReference>
<dbReference type="CD-CODE" id="91857CE7">
    <property type="entry name" value="Nucleolus"/>
</dbReference>
<dbReference type="ChiTaRS" id="ARPC1A">
    <property type="organism name" value="human"/>
</dbReference>
<dbReference type="GeneWiki" id="ARPC1A"/>
<dbReference type="GenomeRNAi" id="10552"/>
<dbReference type="Pharos" id="Q92747">
    <property type="development level" value="Tbio"/>
</dbReference>
<dbReference type="PRO" id="PR:Q92747"/>
<dbReference type="Proteomes" id="UP000005640">
    <property type="component" value="Chromosome 7"/>
</dbReference>
<dbReference type="RNAct" id="Q92747">
    <property type="molecule type" value="protein"/>
</dbReference>
<dbReference type="Bgee" id="ENSG00000241685">
    <property type="expression patterns" value="Expressed in lower esophagus mucosa and 113 other cell types or tissues"/>
</dbReference>
<dbReference type="ExpressionAtlas" id="Q92747">
    <property type="expression patterns" value="baseline and differential"/>
</dbReference>
<dbReference type="GO" id="GO:0015629">
    <property type="term" value="C:actin cytoskeleton"/>
    <property type="evidence" value="ECO:0000304"/>
    <property type="project" value="ProtInc"/>
</dbReference>
<dbReference type="GO" id="GO:0005885">
    <property type="term" value="C:Arp2/3 protein complex"/>
    <property type="evidence" value="ECO:0000250"/>
    <property type="project" value="UniProtKB"/>
</dbReference>
<dbReference type="GO" id="GO:0005829">
    <property type="term" value="C:cytosol"/>
    <property type="evidence" value="ECO:0000304"/>
    <property type="project" value="Reactome"/>
</dbReference>
<dbReference type="GO" id="GO:0070062">
    <property type="term" value="C:extracellular exosome"/>
    <property type="evidence" value="ECO:0007005"/>
    <property type="project" value="UniProtKB"/>
</dbReference>
<dbReference type="GO" id="GO:0098978">
    <property type="term" value="C:glutamatergic synapse"/>
    <property type="evidence" value="ECO:0007669"/>
    <property type="project" value="Ensembl"/>
</dbReference>
<dbReference type="GO" id="GO:0036195">
    <property type="term" value="C:muscle cell projection membrane"/>
    <property type="evidence" value="ECO:0007669"/>
    <property type="project" value="Ensembl"/>
</dbReference>
<dbReference type="GO" id="GO:0005634">
    <property type="term" value="C:nucleus"/>
    <property type="evidence" value="ECO:0000250"/>
    <property type="project" value="UniProtKB"/>
</dbReference>
<dbReference type="GO" id="GO:0035861">
    <property type="term" value="C:site of double-strand break"/>
    <property type="evidence" value="ECO:0000250"/>
    <property type="project" value="UniProtKB"/>
</dbReference>
<dbReference type="GO" id="GO:0003779">
    <property type="term" value="F:actin binding"/>
    <property type="evidence" value="ECO:0000304"/>
    <property type="project" value="ProtInc"/>
</dbReference>
<dbReference type="GO" id="GO:0051015">
    <property type="term" value="F:actin filament binding"/>
    <property type="evidence" value="ECO:0000318"/>
    <property type="project" value="GO_Central"/>
</dbReference>
<dbReference type="GO" id="GO:0030036">
    <property type="term" value="P:actin cytoskeleton organization"/>
    <property type="evidence" value="ECO:0000304"/>
    <property type="project" value="ProtInc"/>
</dbReference>
<dbReference type="GO" id="GO:0034314">
    <property type="term" value="P:Arp2/3 complex-mediated actin nucleation"/>
    <property type="evidence" value="ECO:0000318"/>
    <property type="project" value="GO_Central"/>
</dbReference>
<dbReference type="FunFam" id="2.130.10.10:FF:000030">
    <property type="entry name" value="Actin-related protein 2/3 complex subunit"/>
    <property type="match status" value="1"/>
</dbReference>
<dbReference type="Gene3D" id="2.130.10.10">
    <property type="entry name" value="YVTN repeat-like/Quinoprotein amine dehydrogenase"/>
    <property type="match status" value="1"/>
</dbReference>
<dbReference type="InterPro" id="IPR017383">
    <property type="entry name" value="ARPC1"/>
</dbReference>
<dbReference type="InterPro" id="IPR015943">
    <property type="entry name" value="WD40/YVTN_repeat-like_dom_sf"/>
</dbReference>
<dbReference type="InterPro" id="IPR036322">
    <property type="entry name" value="WD40_repeat_dom_sf"/>
</dbReference>
<dbReference type="InterPro" id="IPR001680">
    <property type="entry name" value="WD40_rpt"/>
</dbReference>
<dbReference type="PANTHER" id="PTHR10709">
    <property type="entry name" value="ACTIN-RELATED PROTEIN 2/3 COMPLEX SUBUNIT 1"/>
    <property type="match status" value="1"/>
</dbReference>
<dbReference type="PANTHER" id="PTHR10709:SF11">
    <property type="entry name" value="ACTIN-RELATED PROTEIN 2_3 COMPLEX SUBUNIT 1A"/>
    <property type="match status" value="1"/>
</dbReference>
<dbReference type="Pfam" id="PF00400">
    <property type="entry name" value="WD40"/>
    <property type="match status" value="2"/>
</dbReference>
<dbReference type="PIRSF" id="PIRSF038093">
    <property type="entry name" value="ARP2/3_su1"/>
    <property type="match status" value="1"/>
</dbReference>
<dbReference type="SMART" id="SM00320">
    <property type="entry name" value="WD40"/>
    <property type="match status" value="6"/>
</dbReference>
<dbReference type="SUPFAM" id="SSF50978">
    <property type="entry name" value="WD40 repeat-like"/>
    <property type="match status" value="1"/>
</dbReference>
<dbReference type="PROSITE" id="PS50082">
    <property type="entry name" value="WD_REPEATS_2"/>
    <property type="match status" value="1"/>
</dbReference>
<dbReference type="PROSITE" id="PS50294">
    <property type="entry name" value="WD_REPEATS_REGION"/>
    <property type="match status" value="1"/>
</dbReference>
<reference key="1">
    <citation type="journal article" date="1996" name="EMBO J.">
        <title>Fission yeast Sop2p: a novel and evolutionarily conserved protein that interacts with Arp3p and modulates profilin function.</title>
        <authorList>
            <person name="Balasubramanian M.K."/>
            <person name="Feoktostiva A."/>
            <person name="McCollum D."/>
            <person name="Gould K.L."/>
        </authorList>
    </citation>
    <scope>NUCLEOTIDE SEQUENCE [MRNA] (ISOFORM 1)</scope>
    <scope>SUBCELLULAR LOCATION</scope>
</reference>
<reference key="2">
    <citation type="journal article" date="2004" name="Nat. Genet.">
        <title>Complete sequencing and characterization of 21,243 full-length human cDNAs.</title>
        <authorList>
            <person name="Ota T."/>
            <person name="Suzuki Y."/>
            <person name="Nishikawa T."/>
            <person name="Otsuki T."/>
            <person name="Sugiyama T."/>
            <person name="Irie R."/>
            <person name="Wakamatsu A."/>
            <person name="Hayashi K."/>
            <person name="Sato H."/>
            <person name="Nagai K."/>
            <person name="Kimura K."/>
            <person name="Makita H."/>
            <person name="Sekine M."/>
            <person name="Obayashi M."/>
            <person name="Nishi T."/>
            <person name="Shibahara T."/>
            <person name="Tanaka T."/>
            <person name="Ishii S."/>
            <person name="Yamamoto J."/>
            <person name="Saito K."/>
            <person name="Kawai Y."/>
            <person name="Isono Y."/>
            <person name="Nakamura Y."/>
            <person name="Nagahari K."/>
            <person name="Murakami K."/>
            <person name="Yasuda T."/>
            <person name="Iwayanagi T."/>
            <person name="Wagatsuma M."/>
            <person name="Shiratori A."/>
            <person name="Sudo H."/>
            <person name="Hosoiri T."/>
            <person name="Kaku Y."/>
            <person name="Kodaira H."/>
            <person name="Kondo H."/>
            <person name="Sugawara M."/>
            <person name="Takahashi M."/>
            <person name="Kanda K."/>
            <person name="Yokoi T."/>
            <person name="Furuya T."/>
            <person name="Kikkawa E."/>
            <person name="Omura Y."/>
            <person name="Abe K."/>
            <person name="Kamihara K."/>
            <person name="Katsuta N."/>
            <person name="Sato K."/>
            <person name="Tanikawa M."/>
            <person name="Yamazaki M."/>
            <person name="Ninomiya K."/>
            <person name="Ishibashi T."/>
            <person name="Yamashita H."/>
            <person name="Murakawa K."/>
            <person name="Fujimori K."/>
            <person name="Tanai H."/>
            <person name="Kimata M."/>
            <person name="Watanabe M."/>
            <person name="Hiraoka S."/>
            <person name="Chiba Y."/>
            <person name="Ishida S."/>
            <person name="Ono Y."/>
            <person name="Takiguchi S."/>
            <person name="Watanabe S."/>
            <person name="Yosida M."/>
            <person name="Hotuta T."/>
            <person name="Kusano J."/>
            <person name="Kanehori K."/>
            <person name="Takahashi-Fujii A."/>
            <person name="Hara H."/>
            <person name="Tanase T.-O."/>
            <person name="Nomura Y."/>
            <person name="Togiya S."/>
            <person name="Komai F."/>
            <person name="Hara R."/>
            <person name="Takeuchi K."/>
            <person name="Arita M."/>
            <person name="Imose N."/>
            <person name="Musashino K."/>
            <person name="Yuuki H."/>
            <person name="Oshima A."/>
            <person name="Sasaki N."/>
            <person name="Aotsuka S."/>
            <person name="Yoshikawa Y."/>
            <person name="Matsunawa H."/>
            <person name="Ichihara T."/>
            <person name="Shiohata N."/>
            <person name="Sano S."/>
            <person name="Moriya S."/>
            <person name="Momiyama H."/>
            <person name="Satoh N."/>
            <person name="Takami S."/>
            <person name="Terashima Y."/>
            <person name="Suzuki O."/>
            <person name="Nakagawa S."/>
            <person name="Senoh A."/>
            <person name="Mizoguchi H."/>
            <person name="Goto Y."/>
            <person name="Shimizu F."/>
            <person name="Wakebe H."/>
            <person name="Hishigaki H."/>
            <person name="Watanabe T."/>
            <person name="Sugiyama A."/>
            <person name="Takemoto M."/>
            <person name="Kawakami B."/>
            <person name="Yamazaki M."/>
            <person name="Watanabe K."/>
            <person name="Kumagai A."/>
            <person name="Itakura S."/>
            <person name="Fukuzumi Y."/>
            <person name="Fujimori Y."/>
            <person name="Komiyama M."/>
            <person name="Tashiro H."/>
            <person name="Tanigami A."/>
            <person name="Fujiwara T."/>
            <person name="Ono T."/>
            <person name="Yamada K."/>
            <person name="Fujii Y."/>
            <person name="Ozaki K."/>
            <person name="Hirao M."/>
            <person name="Ohmori Y."/>
            <person name="Kawabata A."/>
            <person name="Hikiji T."/>
            <person name="Kobatake N."/>
            <person name="Inagaki H."/>
            <person name="Ikema Y."/>
            <person name="Okamoto S."/>
            <person name="Okitani R."/>
            <person name="Kawakami T."/>
            <person name="Noguchi S."/>
            <person name="Itoh T."/>
            <person name="Shigeta K."/>
            <person name="Senba T."/>
            <person name="Matsumura K."/>
            <person name="Nakajima Y."/>
            <person name="Mizuno T."/>
            <person name="Morinaga M."/>
            <person name="Sasaki M."/>
            <person name="Togashi T."/>
            <person name="Oyama M."/>
            <person name="Hata H."/>
            <person name="Watanabe M."/>
            <person name="Komatsu T."/>
            <person name="Mizushima-Sugano J."/>
            <person name="Satoh T."/>
            <person name="Shirai Y."/>
            <person name="Takahashi Y."/>
            <person name="Nakagawa K."/>
            <person name="Okumura K."/>
            <person name="Nagase T."/>
            <person name="Nomura N."/>
            <person name="Kikuchi H."/>
            <person name="Masuho Y."/>
            <person name="Yamashita R."/>
            <person name="Nakai K."/>
            <person name="Yada T."/>
            <person name="Nakamura Y."/>
            <person name="Ohara O."/>
            <person name="Isogai T."/>
            <person name="Sugano S."/>
        </authorList>
    </citation>
    <scope>NUCLEOTIDE SEQUENCE [LARGE SCALE MRNA] (ISOFORM 2)</scope>
</reference>
<reference key="3">
    <citation type="journal article" date="2003" name="Nature">
        <title>The DNA sequence of human chromosome 7.</title>
        <authorList>
            <person name="Hillier L.W."/>
            <person name="Fulton R.S."/>
            <person name="Fulton L.A."/>
            <person name="Graves T.A."/>
            <person name="Pepin K.H."/>
            <person name="Wagner-McPherson C."/>
            <person name="Layman D."/>
            <person name="Maas J."/>
            <person name="Jaeger S."/>
            <person name="Walker R."/>
            <person name="Wylie K."/>
            <person name="Sekhon M."/>
            <person name="Becker M.C."/>
            <person name="O'Laughlin M.D."/>
            <person name="Schaller M.E."/>
            <person name="Fewell G.A."/>
            <person name="Delehaunty K.D."/>
            <person name="Miner T.L."/>
            <person name="Nash W.E."/>
            <person name="Cordes M."/>
            <person name="Du H."/>
            <person name="Sun H."/>
            <person name="Edwards J."/>
            <person name="Bradshaw-Cordum H."/>
            <person name="Ali J."/>
            <person name="Andrews S."/>
            <person name="Isak A."/>
            <person name="Vanbrunt A."/>
            <person name="Nguyen C."/>
            <person name="Du F."/>
            <person name="Lamar B."/>
            <person name="Courtney L."/>
            <person name="Kalicki J."/>
            <person name="Ozersky P."/>
            <person name="Bielicki L."/>
            <person name="Scott K."/>
            <person name="Holmes A."/>
            <person name="Harkins R."/>
            <person name="Harris A."/>
            <person name="Strong C.M."/>
            <person name="Hou S."/>
            <person name="Tomlinson C."/>
            <person name="Dauphin-Kohlberg S."/>
            <person name="Kozlowicz-Reilly A."/>
            <person name="Leonard S."/>
            <person name="Rohlfing T."/>
            <person name="Rock S.M."/>
            <person name="Tin-Wollam A.-M."/>
            <person name="Abbott A."/>
            <person name="Minx P."/>
            <person name="Maupin R."/>
            <person name="Strowmatt C."/>
            <person name="Latreille P."/>
            <person name="Miller N."/>
            <person name="Johnson D."/>
            <person name="Murray J."/>
            <person name="Woessner J.P."/>
            <person name="Wendl M.C."/>
            <person name="Yang S.-P."/>
            <person name="Schultz B.R."/>
            <person name="Wallis J.W."/>
            <person name="Spieth J."/>
            <person name="Bieri T.A."/>
            <person name="Nelson J.O."/>
            <person name="Berkowicz N."/>
            <person name="Wohldmann P.E."/>
            <person name="Cook L.L."/>
            <person name="Hickenbotham M.T."/>
            <person name="Eldred J."/>
            <person name="Williams D."/>
            <person name="Bedell J.A."/>
            <person name="Mardis E.R."/>
            <person name="Clifton S.W."/>
            <person name="Chissoe S.L."/>
            <person name="Marra M.A."/>
            <person name="Raymond C."/>
            <person name="Haugen E."/>
            <person name="Gillett W."/>
            <person name="Zhou Y."/>
            <person name="James R."/>
            <person name="Phelps K."/>
            <person name="Iadanoto S."/>
            <person name="Bubb K."/>
            <person name="Simms E."/>
            <person name="Levy R."/>
            <person name="Clendenning J."/>
            <person name="Kaul R."/>
            <person name="Kent W.J."/>
            <person name="Furey T.S."/>
            <person name="Baertsch R.A."/>
            <person name="Brent M.R."/>
            <person name="Keibler E."/>
            <person name="Flicek P."/>
            <person name="Bork P."/>
            <person name="Suyama M."/>
            <person name="Bailey J.A."/>
            <person name="Portnoy M.E."/>
            <person name="Torrents D."/>
            <person name="Chinwalla A.T."/>
            <person name="Gish W.R."/>
            <person name="Eddy S.R."/>
            <person name="McPherson J.D."/>
            <person name="Olson M.V."/>
            <person name="Eichler E.E."/>
            <person name="Green E.D."/>
            <person name="Waterston R.H."/>
            <person name="Wilson R.K."/>
        </authorList>
    </citation>
    <scope>NUCLEOTIDE SEQUENCE [LARGE SCALE GENOMIC DNA]</scope>
</reference>
<reference key="4">
    <citation type="journal article" date="2003" name="Science">
        <title>Human chromosome 7: DNA sequence and biology.</title>
        <authorList>
            <person name="Scherer S.W."/>
            <person name="Cheung J."/>
            <person name="MacDonald J.R."/>
            <person name="Osborne L.R."/>
            <person name="Nakabayashi K."/>
            <person name="Herbrick J.-A."/>
            <person name="Carson A.R."/>
            <person name="Parker-Katiraee L."/>
            <person name="Skaug J."/>
            <person name="Khaja R."/>
            <person name="Zhang J."/>
            <person name="Hudek A.K."/>
            <person name="Li M."/>
            <person name="Haddad M."/>
            <person name="Duggan G.E."/>
            <person name="Fernandez B.A."/>
            <person name="Kanematsu E."/>
            <person name="Gentles S."/>
            <person name="Christopoulos C.C."/>
            <person name="Choufani S."/>
            <person name="Kwasnicka D."/>
            <person name="Zheng X.H."/>
            <person name="Lai Z."/>
            <person name="Nusskern D.R."/>
            <person name="Zhang Q."/>
            <person name="Gu Z."/>
            <person name="Lu F."/>
            <person name="Zeesman S."/>
            <person name="Nowaczyk M.J."/>
            <person name="Teshima I."/>
            <person name="Chitayat D."/>
            <person name="Shuman C."/>
            <person name="Weksberg R."/>
            <person name="Zackai E.H."/>
            <person name="Grebe T.A."/>
            <person name="Cox S.R."/>
            <person name="Kirkpatrick S.J."/>
            <person name="Rahman N."/>
            <person name="Friedman J.M."/>
            <person name="Heng H.H.Q."/>
            <person name="Pelicci P.G."/>
            <person name="Lo-Coco F."/>
            <person name="Belloni E."/>
            <person name="Shaffer L.G."/>
            <person name="Pober B."/>
            <person name="Morton C.C."/>
            <person name="Gusella J.F."/>
            <person name="Bruns G.A.P."/>
            <person name="Korf B.R."/>
            <person name="Quade B.J."/>
            <person name="Ligon A.H."/>
            <person name="Ferguson H."/>
            <person name="Higgins A.W."/>
            <person name="Leach N.T."/>
            <person name="Herrick S.R."/>
            <person name="Lemyre E."/>
            <person name="Farra C.G."/>
            <person name="Kim H.-G."/>
            <person name="Summers A.M."/>
            <person name="Gripp K.W."/>
            <person name="Roberts W."/>
            <person name="Szatmari P."/>
            <person name="Winsor E.J.T."/>
            <person name="Grzeschik K.-H."/>
            <person name="Teebi A."/>
            <person name="Minassian B.A."/>
            <person name="Kere J."/>
            <person name="Armengol L."/>
            <person name="Pujana M.A."/>
            <person name="Estivill X."/>
            <person name="Wilson M.D."/>
            <person name="Koop B.F."/>
            <person name="Tosi S."/>
            <person name="Moore G.E."/>
            <person name="Boright A.P."/>
            <person name="Zlotorynski E."/>
            <person name="Kerem B."/>
            <person name="Kroisel P.M."/>
            <person name="Petek E."/>
            <person name="Oscier D.G."/>
            <person name="Mould S.J."/>
            <person name="Doehner H."/>
            <person name="Doehner K."/>
            <person name="Rommens J.M."/>
            <person name="Vincent J.B."/>
            <person name="Venter J.C."/>
            <person name="Li P.W."/>
            <person name="Mural R.J."/>
            <person name="Adams M.D."/>
            <person name="Tsui L.-C."/>
        </authorList>
    </citation>
    <scope>NUCLEOTIDE SEQUENCE [LARGE SCALE GENOMIC DNA]</scope>
</reference>
<reference key="5">
    <citation type="submission" date="2005-09" db="EMBL/GenBank/DDBJ databases">
        <authorList>
            <person name="Mural R.J."/>
            <person name="Istrail S."/>
            <person name="Sutton G.G."/>
            <person name="Florea L."/>
            <person name="Halpern A.L."/>
            <person name="Mobarry C.M."/>
            <person name="Lippert R."/>
            <person name="Walenz B."/>
            <person name="Shatkay H."/>
            <person name="Dew I."/>
            <person name="Miller J.R."/>
            <person name="Flanigan M.J."/>
            <person name="Edwards N.J."/>
            <person name="Bolanos R."/>
            <person name="Fasulo D."/>
            <person name="Halldorsson B.V."/>
            <person name="Hannenhalli S."/>
            <person name="Turner R."/>
            <person name="Yooseph S."/>
            <person name="Lu F."/>
            <person name="Nusskern D.R."/>
            <person name="Shue B.C."/>
            <person name="Zheng X.H."/>
            <person name="Zhong F."/>
            <person name="Delcher A.L."/>
            <person name="Huson D.H."/>
            <person name="Kravitz S.A."/>
            <person name="Mouchard L."/>
            <person name="Reinert K."/>
            <person name="Remington K.A."/>
            <person name="Clark A.G."/>
            <person name="Waterman M.S."/>
            <person name="Eichler E.E."/>
            <person name="Adams M.D."/>
            <person name="Hunkapiller M.W."/>
            <person name="Myers E.W."/>
            <person name="Venter J.C."/>
        </authorList>
    </citation>
    <scope>NUCLEOTIDE SEQUENCE [LARGE SCALE GENOMIC DNA]</scope>
</reference>
<reference key="6">
    <citation type="journal article" date="2004" name="Genome Res.">
        <title>The status, quality, and expansion of the NIH full-length cDNA project: the Mammalian Gene Collection (MGC).</title>
        <authorList>
            <consortium name="The MGC Project Team"/>
        </authorList>
    </citation>
    <scope>NUCLEOTIDE SEQUENCE [LARGE SCALE MRNA] (ISOFORM 1)</scope>
    <source>
        <tissue>Pancreas</tissue>
        <tissue>Uterus</tissue>
    </source>
</reference>
<accession>Q92747</accession>
<accession>A4D276</accession>
<accession>B4DLQ7</accession>
<accession>D6W5S1</accession>
<accession>Q7Z5U8</accession>
<accession>Q86WU5</accession>
<accession>Q8IXQ0</accession>
<feature type="chain" id="PRO_0000050852" description="Actin-related protein 2/3 complex subunit 1A">
    <location>
        <begin position="1"/>
        <end position="370"/>
    </location>
</feature>
<feature type="repeat" description="WD 1">
    <location>
        <begin position="6"/>
        <end position="45"/>
    </location>
</feature>
<feature type="repeat" description="WD 2">
    <location>
        <begin position="50"/>
        <end position="89"/>
    </location>
</feature>
<feature type="repeat" description="WD 3">
    <location>
        <begin position="140"/>
        <end position="179"/>
    </location>
</feature>
<feature type="repeat" description="WD 4">
    <location>
        <begin position="202"/>
        <end position="241"/>
    </location>
</feature>
<feature type="repeat" description="WD 5">
    <location>
        <begin position="244"/>
        <end position="284"/>
    </location>
</feature>
<feature type="repeat" description="WD 6">
    <location>
        <begin position="322"/>
        <end position="365"/>
    </location>
</feature>
<feature type="splice variant" id="VSP_056389" description="In isoform 2." evidence="3">
    <original>MSLHQFLLEPITCHAWNRDRTQIALSPNNHEVHIYKKNGSQWVKAHELKEHNGHITG</original>
    <variation>MHERFIHCFC</variation>
    <location>
        <begin position="1"/>
        <end position="57"/>
    </location>
</feature>
<feature type="splice variant" id="VSP_056390" description="In isoform 2." evidence="3">
    <original>TLESSIQGLRIM</original>
    <variation>EPSRHGLPQLPGGAHQLPRLEQGPHPDCHLPQQP</variation>
    <location>
        <begin position="359"/>
        <end position="370"/>
    </location>
</feature>
<feature type="sequence conflict" description="In Ref. 1; CAA70203." evidence="4" ref="1">
    <original>S</original>
    <variation>A</variation>
    <location>
        <position position="127"/>
    </location>
</feature>
<feature type="sequence conflict" description="In Ref. 1; CAA70203." evidence="4" ref="1">
    <original>P</original>
    <variation>K</variation>
    <location>
        <position position="180"/>
    </location>
</feature>
<feature type="sequence conflict" description="In Ref. 1; CAA70203." evidence="4" ref="1">
    <original>N</original>
    <variation>I</variation>
    <location>
        <position position="273"/>
    </location>
</feature>
<evidence type="ECO:0000250" key="1">
    <source>
        <dbReference type="UniProtKB" id="Q8AVT9"/>
    </source>
</evidence>
<evidence type="ECO:0000269" key="2">
    <source>
    </source>
</evidence>
<evidence type="ECO:0000303" key="3">
    <source>
    </source>
</evidence>
<evidence type="ECO:0000305" key="4"/>
<evidence type="ECO:0000305" key="5">
    <source>
    </source>
</evidence>
<sequence>MSLHQFLLEPITCHAWNRDRTQIALSPNNHEVHIYKKNGSQWVKAHELKEHNGHITGIDWAPKSDRIVTCGADRNAYVWSQKDGVWKPTLVILRINRAATFVKWSPLENKFAVGSGARLISVCYFESENDWWVSKHIKKPIRSTVLSLDWHPNNVLLAAGSCDFKCRVFSAYIKEVDEKPASTPWGSKMPFGQLMSEFGGSGTGGWVHGVSFSASGSRLAWVSHDSTVSVADASKSVQVSTLKTEFLPLLSVSFVSENSVVAAGHDCCPMLFNYDDRGCLTFVSKLDIPKQSIQRNMSAMERFRNMDKRATTEDRNTALETLHQNSITQVSIYEVDKQDCRKFCTTGIDGAMTIWDFKTLESSIQGLRIM</sequence>
<organism>
    <name type="scientific">Homo sapiens</name>
    <name type="common">Human</name>
    <dbReference type="NCBI Taxonomy" id="9606"/>
    <lineage>
        <taxon>Eukaryota</taxon>
        <taxon>Metazoa</taxon>
        <taxon>Chordata</taxon>
        <taxon>Craniata</taxon>
        <taxon>Vertebrata</taxon>
        <taxon>Euteleostomi</taxon>
        <taxon>Mammalia</taxon>
        <taxon>Eutheria</taxon>
        <taxon>Euarchontoglires</taxon>
        <taxon>Primates</taxon>
        <taxon>Haplorrhini</taxon>
        <taxon>Catarrhini</taxon>
        <taxon>Hominidae</taxon>
        <taxon>Homo</taxon>
    </lineage>
</organism>
<keyword id="KW-0002">3D-structure</keyword>
<keyword id="KW-0009">Actin-binding</keyword>
<keyword id="KW-0025">Alternative splicing</keyword>
<keyword id="KW-0963">Cytoplasm</keyword>
<keyword id="KW-0206">Cytoskeleton</keyword>
<keyword id="KW-0539">Nucleus</keyword>
<keyword id="KW-1267">Proteomics identification</keyword>
<keyword id="KW-1185">Reference proteome</keyword>
<keyword id="KW-0677">Repeat</keyword>
<keyword id="KW-0853">WD repeat</keyword>
<comment type="function">
    <text evidence="5">Probably functions as a component of the Arp2/3 complex which is involved in regulation of actin polymerization and together with an activating nucleation-promoting factor (NPF) mediates the formation of branched actin networks.</text>
</comment>
<comment type="subunit">
    <text evidence="1 5">Probable component of the Arp2/3 complex in which it may replace ARPC1B (Probable). In addition to its role in the cytoplasmic cytoskeleton, the Arp2/3 complex also promotes actin polymerization in the nucleus, thereby regulating gene transcription and repair of damaged DNA (By similarity).</text>
</comment>
<comment type="subcellular location">
    <subcellularLocation>
        <location evidence="2">Cytoplasm</location>
        <location evidence="2">Cytoskeleton</location>
    </subcellularLocation>
    <subcellularLocation>
        <location evidence="1">Nucleus</location>
    </subcellularLocation>
</comment>
<comment type="alternative products">
    <event type="alternative splicing"/>
    <isoform>
        <id>Q92747-1</id>
        <name>1</name>
        <sequence type="displayed"/>
    </isoform>
    <isoform>
        <id>Q92747-2</id>
        <name>2</name>
        <sequence type="described" ref="VSP_056389 VSP_056390"/>
    </isoform>
</comment>
<comment type="similarity">
    <text evidence="4">Belongs to the WD repeat ARPC1 family.</text>
</comment>
<proteinExistence type="evidence at protein level"/>
<name>ARC1A_HUMAN</name>
<gene>
    <name type="primary">ARPC1A</name>
    <name type="synonym">SOP2L</name>
</gene>
<protein>
    <recommendedName>
        <fullName>Actin-related protein 2/3 complex subunit 1A</fullName>
    </recommendedName>
    <alternativeName>
        <fullName>SOP2-like protein</fullName>
    </alternativeName>
</protein>